<name>DAPB_ACTP7</name>
<accession>B3H1A7</accession>
<organism>
    <name type="scientific">Actinobacillus pleuropneumoniae serotype 7 (strain AP76)</name>
    <dbReference type="NCBI Taxonomy" id="537457"/>
    <lineage>
        <taxon>Bacteria</taxon>
        <taxon>Pseudomonadati</taxon>
        <taxon>Pseudomonadota</taxon>
        <taxon>Gammaproteobacteria</taxon>
        <taxon>Pasteurellales</taxon>
        <taxon>Pasteurellaceae</taxon>
        <taxon>Actinobacillus</taxon>
    </lineage>
</organism>
<sequence length="269" mass="28701">MTLKIGIVGAGGRMGRNLITAVQNAEGVELGAAFERKGSSLVGADAGEVAGIGATGVKISDDLNQNTNFDVLIDFTRPEGTLEHIKFCVANGKKMVIGTTGFDDAGKQAIQTAAEQISIVFASNYSVGVNLVFKLLEKAAKVMGDYCDIEVIEAHHRHKVDAPSGTALSMGEHIAKTLGRDLKTHGVFAREGITGERKRDEIGFATIRAGDVVGEHSVWFADEGERVEIAHKASSRMTFANGAVRAAKWLNTKQNGLFDMTDVLDLNNL</sequence>
<protein>
    <recommendedName>
        <fullName evidence="1">4-hydroxy-tetrahydrodipicolinate reductase</fullName>
        <shortName evidence="1">HTPA reductase</shortName>
        <ecNumber evidence="1">1.17.1.8</ecNumber>
    </recommendedName>
</protein>
<proteinExistence type="inferred from homology"/>
<keyword id="KW-0028">Amino-acid biosynthesis</keyword>
<keyword id="KW-0963">Cytoplasm</keyword>
<keyword id="KW-0220">Diaminopimelate biosynthesis</keyword>
<keyword id="KW-0457">Lysine biosynthesis</keyword>
<keyword id="KW-0520">NAD</keyword>
<keyword id="KW-0521">NADP</keyword>
<keyword id="KW-0560">Oxidoreductase</keyword>
<reference key="1">
    <citation type="submission" date="2008-06" db="EMBL/GenBank/DDBJ databases">
        <title>Genome and proteome analysis of A. pleuropneumoniae serotype 7.</title>
        <authorList>
            <person name="Linke B."/>
            <person name="Buettner F."/>
            <person name="Martinez-Arias R."/>
            <person name="Goesmann A."/>
            <person name="Baltes N."/>
            <person name="Tegetmeyer H."/>
            <person name="Singh M."/>
            <person name="Gerlach G.F."/>
        </authorList>
    </citation>
    <scope>NUCLEOTIDE SEQUENCE [LARGE SCALE GENOMIC DNA]</scope>
    <source>
        <strain>AP76</strain>
    </source>
</reference>
<gene>
    <name evidence="1" type="primary">dapB</name>
    <name type="ordered locus">APP7_0724</name>
</gene>
<dbReference type="EC" id="1.17.1.8" evidence="1"/>
<dbReference type="EMBL" id="CP001091">
    <property type="protein sequence ID" value="ACE61376.1"/>
    <property type="molecule type" value="Genomic_DNA"/>
</dbReference>
<dbReference type="RefSeq" id="WP_005617169.1">
    <property type="nucleotide sequence ID" value="NC_010939.1"/>
</dbReference>
<dbReference type="SMR" id="B3H1A7"/>
<dbReference type="KEGG" id="apa:APP7_0724"/>
<dbReference type="HOGENOM" id="CLU_047479_2_1_6"/>
<dbReference type="UniPathway" id="UPA00034">
    <property type="reaction ID" value="UER00018"/>
</dbReference>
<dbReference type="Proteomes" id="UP000001226">
    <property type="component" value="Chromosome"/>
</dbReference>
<dbReference type="GO" id="GO:0005829">
    <property type="term" value="C:cytosol"/>
    <property type="evidence" value="ECO:0007669"/>
    <property type="project" value="TreeGrafter"/>
</dbReference>
<dbReference type="GO" id="GO:0008839">
    <property type="term" value="F:4-hydroxy-tetrahydrodipicolinate reductase"/>
    <property type="evidence" value="ECO:0007669"/>
    <property type="project" value="UniProtKB-EC"/>
</dbReference>
<dbReference type="GO" id="GO:0051287">
    <property type="term" value="F:NAD binding"/>
    <property type="evidence" value="ECO:0007669"/>
    <property type="project" value="UniProtKB-UniRule"/>
</dbReference>
<dbReference type="GO" id="GO:0050661">
    <property type="term" value="F:NADP binding"/>
    <property type="evidence" value="ECO:0007669"/>
    <property type="project" value="UniProtKB-UniRule"/>
</dbReference>
<dbReference type="GO" id="GO:0016726">
    <property type="term" value="F:oxidoreductase activity, acting on CH or CH2 groups, NAD or NADP as acceptor"/>
    <property type="evidence" value="ECO:0007669"/>
    <property type="project" value="UniProtKB-UniRule"/>
</dbReference>
<dbReference type="GO" id="GO:0019877">
    <property type="term" value="P:diaminopimelate biosynthetic process"/>
    <property type="evidence" value="ECO:0007669"/>
    <property type="project" value="UniProtKB-UniRule"/>
</dbReference>
<dbReference type="GO" id="GO:0009089">
    <property type="term" value="P:lysine biosynthetic process via diaminopimelate"/>
    <property type="evidence" value="ECO:0007669"/>
    <property type="project" value="UniProtKB-UniRule"/>
</dbReference>
<dbReference type="CDD" id="cd02274">
    <property type="entry name" value="DHDPR_N"/>
    <property type="match status" value="1"/>
</dbReference>
<dbReference type="FunFam" id="3.30.360.10:FF:000004">
    <property type="entry name" value="4-hydroxy-tetrahydrodipicolinate reductase"/>
    <property type="match status" value="1"/>
</dbReference>
<dbReference type="FunFam" id="3.40.50.720:FF:000048">
    <property type="entry name" value="4-hydroxy-tetrahydrodipicolinate reductase"/>
    <property type="match status" value="1"/>
</dbReference>
<dbReference type="Gene3D" id="3.30.360.10">
    <property type="entry name" value="Dihydrodipicolinate Reductase, domain 2"/>
    <property type="match status" value="1"/>
</dbReference>
<dbReference type="Gene3D" id="3.40.50.720">
    <property type="entry name" value="NAD(P)-binding Rossmann-like Domain"/>
    <property type="match status" value="1"/>
</dbReference>
<dbReference type="HAMAP" id="MF_00102">
    <property type="entry name" value="DapB"/>
    <property type="match status" value="1"/>
</dbReference>
<dbReference type="InterPro" id="IPR022663">
    <property type="entry name" value="DapB_C"/>
</dbReference>
<dbReference type="InterPro" id="IPR000846">
    <property type="entry name" value="DapB_N"/>
</dbReference>
<dbReference type="InterPro" id="IPR022664">
    <property type="entry name" value="DapB_N_CS"/>
</dbReference>
<dbReference type="InterPro" id="IPR023940">
    <property type="entry name" value="DHDPR_bac"/>
</dbReference>
<dbReference type="InterPro" id="IPR036291">
    <property type="entry name" value="NAD(P)-bd_dom_sf"/>
</dbReference>
<dbReference type="NCBIfam" id="TIGR00036">
    <property type="entry name" value="dapB"/>
    <property type="match status" value="1"/>
</dbReference>
<dbReference type="PANTHER" id="PTHR20836:SF0">
    <property type="entry name" value="4-HYDROXY-TETRAHYDRODIPICOLINATE REDUCTASE 1, CHLOROPLASTIC-RELATED"/>
    <property type="match status" value="1"/>
</dbReference>
<dbReference type="PANTHER" id="PTHR20836">
    <property type="entry name" value="DIHYDRODIPICOLINATE REDUCTASE"/>
    <property type="match status" value="1"/>
</dbReference>
<dbReference type="Pfam" id="PF05173">
    <property type="entry name" value="DapB_C"/>
    <property type="match status" value="1"/>
</dbReference>
<dbReference type="Pfam" id="PF01113">
    <property type="entry name" value="DapB_N"/>
    <property type="match status" value="1"/>
</dbReference>
<dbReference type="PIRSF" id="PIRSF000161">
    <property type="entry name" value="DHPR"/>
    <property type="match status" value="1"/>
</dbReference>
<dbReference type="SUPFAM" id="SSF55347">
    <property type="entry name" value="Glyceraldehyde-3-phosphate dehydrogenase-like, C-terminal domain"/>
    <property type="match status" value="1"/>
</dbReference>
<dbReference type="SUPFAM" id="SSF51735">
    <property type="entry name" value="NAD(P)-binding Rossmann-fold domains"/>
    <property type="match status" value="1"/>
</dbReference>
<dbReference type="PROSITE" id="PS01298">
    <property type="entry name" value="DAPB"/>
    <property type="match status" value="1"/>
</dbReference>
<feature type="chain" id="PRO_1000093938" description="4-hydroxy-tetrahydrodipicolinate reductase">
    <location>
        <begin position="1"/>
        <end position="269"/>
    </location>
</feature>
<feature type="active site" description="Proton donor/acceptor" evidence="1">
    <location>
        <position position="155"/>
    </location>
</feature>
<feature type="active site" description="Proton donor" evidence="1">
    <location>
        <position position="159"/>
    </location>
</feature>
<feature type="binding site" evidence="1">
    <location>
        <begin position="9"/>
        <end position="14"/>
    </location>
    <ligand>
        <name>NAD(+)</name>
        <dbReference type="ChEBI" id="CHEBI:57540"/>
    </ligand>
</feature>
<feature type="binding site" evidence="1">
    <location>
        <position position="35"/>
    </location>
    <ligand>
        <name>NAD(+)</name>
        <dbReference type="ChEBI" id="CHEBI:57540"/>
    </ligand>
</feature>
<feature type="binding site" evidence="1">
    <location>
        <position position="36"/>
    </location>
    <ligand>
        <name>NADP(+)</name>
        <dbReference type="ChEBI" id="CHEBI:58349"/>
    </ligand>
</feature>
<feature type="binding site" evidence="1">
    <location>
        <begin position="98"/>
        <end position="100"/>
    </location>
    <ligand>
        <name>NAD(+)</name>
        <dbReference type="ChEBI" id="CHEBI:57540"/>
    </ligand>
</feature>
<feature type="binding site" evidence="1">
    <location>
        <begin position="122"/>
        <end position="125"/>
    </location>
    <ligand>
        <name>NAD(+)</name>
        <dbReference type="ChEBI" id="CHEBI:57540"/>
    </ligand>
</feature>
<feature type="binding site" evidence="1">
    <location>
        <position position="156"/>
    </location>
    <ligand>
        <name>(S)-2,3,4,5-tetrahydrodipicolinate</name>
        <dbReference type="ChEBI" id="CHEBI:16845"/>
    </ligand>
</feature>
<feature type="binding site" evidence="1">
    <location>
        <begin position="165"/>
        <end position="166"/>
    </location>
    <ligand>
        <name>(S)-2,3,4,5-tetrahydrodipicolinate</name>
        <dbReference type="ChEBI" id="CHEBI:16845"/>
    </ligand>
</feature>
<comment type="function">
    <text evidence="1">Catalyzes the conversion of 4-hydroxy-tetrahydrodipicolinate (HTPA) to tetrahydrodipicolinate.</text>
</comment>
<comment type="catalytic activity">
    <reaction evidence="1">
        <text>(S)-2,3,4,5-tetrahydrodipicolinate + NAD(+) + H2O = (2S,4S)-4-hydroxy-2,3,4,5-tetrahydrodipicolinate + NADH + H(+)</text>
        <dbReference type="Rhea" id="RHEA:35323"/>
        <dbReference type="ChEBI" id="CHEBI:15377"/>
        <dbReference type="ChEBI" id="CHEBI:15378"/>
        <dbReference type="ChEBI" id="CHEBI:16845"/>
        <dbReference type="ChEBI" id="CHEBI:57540"/>
        <dbReference type="ChEBI" id="CHEBI:57945"/>
        <dbReference type="ChEBI" id="CHEBI:67139"/>
        <dbReference type="EC" id="1.17.1.8"/>
    </reaction>
</comment>
<comment type="catalytic activity">
    <reaction evidence="1">
        <text>(S)-2,3,4,5-tetrahydrodipicolinate + NADP(+) + H2O = (2S,4S)-4-hydroxy-2,3,4,5-tetrahydrodipicolinate + NADPH + H(+)</text>
        <dbReference type="Rhea" id="RHEA:35331"/>
        <dbReference type="ChEBI" id="CHEBI:15377"/>
        <dbReference type="ChEBI" id="CHEBI:15378"/>
        <dbReference type="ChEBI" id="CHEBI:16845"/>
        <dbReference type="ChEBI" id="CHEBI:57783"/>
        <dbReference type="ChEBI" id="CHEBI:58349"/>
        <dbReference type="ChEBI" id="CHEBI:67139"/>
        <dbReference type="EC" id="1.17.1.8"/>
    </reaction>
</comment>
<comment type="pathway">
    <text evidence="1">Amino-acid biosynthesis; L-lysine biosynthesis via DAP pathway; (S)-tetrahydrodipicolinate from L-aspartate: step 4/4.</text>
</comment>
<comment type="subcellular location">
    <subcellularLocation>
        <location evidence="1">Cytoplasm</location>
    </subcellularLocation>
</comment>
<comment type="similarity">
    <text evidence="1">Belongs to the DapB family.</text>
</comment>
<comment type="caution">
    <text evidence="2">Was originally thought to be a dihydrodipicolinate reductase (DHDPR), catalyzing the conversion of dihydrodipicolinate to tetrahydrodipicolinate. However, it was shown in E.coli that the substrate of the enzymatic reaction is not dihydrodipicolinate (DHDP) but in fact (2S,4S)-4-hydroxy-2,3,4,5-tetrahydrodipicolinic acid (HTPA), the product released by the DapA-catalyzed reaction.</text>
</comment>
<evidence type="ECO:0000255" key="1">
    <source>
        <dbReference type="HAMAP-Rule" id="MF_00102"/>
    </source>
</evidence>
<evidence type="ECO:0000305" key="2"/>